<evidence type="ECO:0000255" key="1">
    <source>
        <dbReference type="HAMAP-Rule" id="MF_01859"/>
    </source>
</evidence>
<evidence type="ECO:0000256" key="2">
    <source>
        <dbReference type="SAM" id="MobiDB-lite"/>
    </source>
</evidence>
<evidence type="ECO:0000305" key="3"/>
<keyword id="KW-0963">Cytoplasm</keyword>
<keyword id="KW-0489">Methyltransferase</keyword>
<keyword id="KW-0698">rRNA processing</keyword>
<keyword id="KW-0949">S-adenosyl-L-methionine</keyword>
<keyword id="KW-0808">Transferase</keyword>
<proteinExistence type="inferred from homology"/>
<organism>
    <name type="scientific">Shewanella halifaxensis (strain HAW-EB4)</name>
    <dbReference type="NCBI Taxonomy" id="458817"/>
    <lineage>
        <taxon>Bacteria</taxon>
        <taxon>Pseudomonadati</taxon>
        <taxon>Pseudomonadota</taxon>
        <taxon>Gammaproteobacteria</taxon>
        <taxon>Alteromonadales</taxon>
        <taxon>Shewanellaceae</taxon>
        <taxon>Shewanella</taxon>
    </lineage>
</organism>
<reference key="1">
    <citation type="submission" date="2008-01" db="EMBL/GenBank/DDBJ databases">
        <title>Complete sequence of Shewanella halifaxensis HAW-EB4.</title>
        <authorList>
            <consortium name="US DOE Joint Genome Institute"/>
            <person name="Copeland A."/>
            <person name="Lucas S."/>
            <person name="Lapidus A."/>
            <person name="Glavina del Rio T."/>
            <person name="Dalin E."/>
            <person name="Tice H."/>
            <person name="Bruce D."/>
            <person name="Goodwin L."/>
            <person name="Pitluck S."/>
            <person name="Sims D."/>
            <person name="Brettin T."/>
            <person name="Detter J.C."/>
            <person name="Han C."/>
            <person name="Kuske C.R."/>
            <person name="Schmutz J."/>
            <person name="Larimer F."/>
            <person name="Land M."/>
            <person name="Hauser L."/>
            <person name="Kyrpides N."/>
            <person name="Kim E."/>
            <person name="Zhao J.-S."/>
            <person name="Richardson P."/>
        </authorList>
    </citation>
    <scope>NUCLEOTIDE SEQUENCE [LARGE SCALE GENOMIC DNA]</scope>
    <source>
        <strain>HAW-EB4</strain>
    </source>
</reference>
<protein>
    <recommendedName>
        <fullName evidence="1">Ribosomal RNA large subunit methyltransferase G</fullName>
        <ecNumber evidence="1">2.1.1.174</ecNumber>
    </recommendedName>
    <alternativeName>
        <fullName evidence="1">23S rRNA m2G1835 methyltransferase</fullName>
    </alternativeName>
    <alternativeName>
        <fullName evidence="1">rRNA (guanine-N(2)-)-methyltransferase RlmG</fullName>
    </alternativeName>
</protein>
<dbReference type="EC" id="2.1.1.174" evidence="1"/>
<dbReference type="EMBL" id="CP000931">
    <property type="protein sequence ID" value="ABZ77738.1"/>
    <property type="status" value="ALT_INIT"/>
    <property type="molecule type" value="Genomic_DNA"/>
</dbReference>
<dbReference type="RefSeq" id="WP_041416502.1">
    <property type="nucleotide sequence ID" value="NC_010334.1"/>
</dbReference>
<dbReference type="SMR" id="B0TR07"/>
<dbReference type="STRING" id="458817.Shal_3191"/>
<dbReference type="KEGG" id="shl:Shal_3191"/>
<dbReference type="eggNOG" id="COG2813">
    <property type="taxonomic scope" value="Bacteria"/>
</dbReference>
<dbReference type="HOGENOM" id="CLU_040288_4_0_6"/>
<dbReference type="Proteomes" id="UP000001317">
    <property type="component" value="Chromosome"/>
</dbReference>
<dbReference type="GO" id="GO:0005737">
    <property type="term" value="C:cytoplasm"/>
    <property type="evidence" value="ECO:0007669"/>
    <property type="project" value="UniProtKB-SubCell"/>
</dbReference>
<dbReference type="GO" id="GO:0052916">
    <property type="term" value="F:23S rRNA (guanine(1835)-N(2))-methyltransferase activity"/>
    <property type="evidence" value="ECO:0007669"/>
    <property type="project" value="UniProtKB-EC"/>
</dbReference>
<dbReference type="GO" id="GO:0003676">
    <property type="term" value="F:nucleic acid binding"/>
    <property type="evidence" value="ECO:0007669"/>
    <property type="project" value="InterPro"/>
</dbReference>
<dbReference type="CDD" id="cd02440">
    <property type="entry name" value="AdoMet_MTases"/>
    <property type="match status" value="1"/>
</dbReference>
<dbReference type="Gene3D" id="3.40.50.150">
    <property type="entry name" value="Vaccinia Virus protein VP39"/>
    <property type="match status" value="2"/>
</dbReference>
<dbReference type="HAMAP" id="MF_01859">
    <property type="entry name" value="23SrRNA_methyltr_G"/>
    <property type="match status" value="1"/>
</dbReference>
<dbReference type="InterPro" id="IPR002052">
    <property type="entry name" value="DNA_methylase_N6_adenine_CS"/>
</dbReference>
<dbReference type="InterPro" id="IPR017237">
    <property type="entry name" value="rRNA_m2G-MeTrfase_RlmG"/>
</dbReference>
<dbReference type="InterPro" id="IPR046977">
    <property type="entry name" value="RsmC/RlmG"/>
</dbReference>
<dbReference type="InterPro" id="IPR029063">
    <property type="entry name" value="SAM-dependent_MTases_sf"/>
</dbReference>
<dbReference type="InterPro" id="IPR007848">
    <property type="entry name" value="Small_mtfrase_dom"/>
</dbReference>
<dbReference type="PANTHER" id="PTHR47816:SF5">
    <property type="entry name" value="RIBOSOMAL RNA LARGE SUBUNIT METHYLTRANSFERASE G"/>
    <property type="match status" value="1"/>
</dbReference>
<dbReference type="PANTHER" id="PTHR47816">
    <property type="entry name" value="RIBOSOMAL RNA SMALL SUBUNIT METHYLTRANSFERASE C"/>
    <property type="match status" value="1"/>
</dbReference>
<dbReference type="Pfam" id="PF05175">
    <property type="entry name" value="MTS"/>
    <property type="match status" value="1"/>
</dbReference>
<dbReference type="PIRSF" id="PIRSF037565">
    <property type="entry name" value="RRNA_m2G_Mtase_RsmD_prd"/>
    <property type="match status" value="1"/>
</dbReference>
<dbReference type="SUPFAM" id="SSF53335">
    <property type="entry name" value="S-adenosyl-L-methionine-dependent methyltransferases"/>
    <property type="match status" value="1"/>
</dbReference>
<accession>B0TR07</accession>
<gene>
    <name evidence="1" type="primary">rlmG</name>
    <name type="ordered locus">Shal_3191</name>
</gene>
<sequence length="421" mass="46654">MTTQFSVSGIELELLRYPSRQESNLQAWDAADEHLIKHLIDTEQTNINTAIINDNFGALTAGLLSIDPSWALTLETDAKTSLLGTTQNLSRNQLPTDTLTWVNSCDELPQGFELVLMKLPKNLNYFSHQLNRLSHVLPAGTRVLIGAKAKSINKSLLETIEKNLGAASASLTWKKTRVITCISDGKVRPLPKATTWSVPEFKLQITNLSNVFAANKLDIGARIMLDNMPKGDFKSIVDLGCGNGILGLHAKQVFPEAYIHFIDDSEMAVASARENWALNKLDNPALVGEQATFGWDDCLTHMSEGFRPDLILCNPPFHQGEAITDHIAWQMFLDAFRRLKNGGILHVVGNRHLAYHVKLQRIFKNCTTVASNGKFVILQAQKISKKALEPELEQESDLNSKLDANTEVPHPQSALYGKPKA</sequence>
<name>RLMG_SHEHH</name>
<feature type="chain" id="PRO_0000366510" description="Ribosomal RNA large subunit methyltransferase G">
    <location>
        <begin position="1"/>
        <end position="421"/>
    </location>
</feature>
<feature type="region of interest" description="Disordered" evidence="2">
    <location>
        <begin position="389"/>
        <end position="421"/>
    </location>
</feature>
<comment type="function">
    <text evidence="1">Specifically methylates the guanine in position 1835 (m2G1835) of 23S rRNA.</text>
</comment>
<comment type="catalytic activity">
    <reaction evidence="1">
        <text>guanosine(1835) in 23S rRNA + S-adenosyl-L-methionine = N(2)-methylguanosine(1835) in 23S rRNA + S-adenosyl-L-homocysteine + H(+)</text>
        <dbReference type="Rhea" id="RHEA:42744"/>
        <dbReference type="Rhea" id="RHEA-COMP:10217"/>
        <dbReference type="Rhea" id="RHEA-COMP:10218"/>
        <dbReference type="ChEBI" id="CHEBI:15378"/>
        <dbReference type="ChEBI" id="CHEBI:57856"/>
        <dbReference type="ChEBI" id="CHEBI:59789"/>
        <dbReference type="ChEBI" id="CHEBI:74269"/>
        <dbReference type="ChEBI" id="CHEBI:74481"/>
        <dbReference type="EC" id="2.1.1.174"/>
    </reaction>
</comment>
<comment type="subcellular location">
    <subcellularLocation>
        <location evidence="1">Cytoplasm</location>
    </subcellularLocation>
</comment>
<comment type="similarity">
    <text evidence="1">Belongs to the methyltransferase superfamily. RlmG family.</text>
</comment>
<comment type="sequence caution" evidence="3">
    <conflict type="erroneous initiation">
        <sequence resource="EMBL-CDS" id="ABZ77738"/>
    </conflict>
</comment>